<proteinExistence type="inferred from homology"/>
<name>RECO_XANCP</name>
<sequence>MLIEHERGFVLHARAWRETSLLVEVLTEQHGRVGLLARGVHGPRKQALRAALQPLQLIQFTAVQRGELAQLRQAEAIDTAPRLLGEAMLAGFYISELLLRLAPRHAPVPELFDCYAQARAHLASGAALAWGLRQFERDVLDGLGFGFDLQHDSDGQPIDPAARYRLDPQDGARRVLSERLAQDRRETVTGAALLALGEDRVPATEDMPGLRRSMRGVLLHHLSGRGLKSWEMLEELARRGA</sequence>
<gene>
    <name evidence="1" type="primary">recO</name>
    <name type="ordered locus">XCC1275</name>
</gene>
<dbReference type="EMBL" id="AE008922">
    <property type="protein sequence ID" value="AAM40573.1"/>
    <property type="molecule type" value="Genomic_DNA"/>
</dbReference>
<dbReference type="RefSeq" id="NP_636649.1">
    <property type="nucleotide sequence ID" value="NC_003902.1"/>
</dbReference>
<dbReference type="RefSeq" id="WP_011036469.1">
    <property type="nucleotide sequence ID" value="NC_003902.1"/>
</dbReference>
<dbReference type="SMR" id="Q8PB50"/>
<dbReference type="STRING" id="190485.XCC1275"/>
<dbReference type="EnsemblBacteria" id="AAM40573">
    <property type="protein sequence ID" value="AAM40573"/>
    <property type="gene ID" value="XCC1275"/>
</dbReference>
<dbReference type="KEGG" id="xcc:XCC1275"/>
<dbReference type="PATRIC" id="fig|190485.4.peg.1365"/>
<dbReference type="eggNOG" id="COG1381">
    <property type="taxonomic scope" value="Bacteria"/>
</dbReference>
<dbReference type="HOGENOM" id="CLU_066645_1_0_6"/>
<dbReference type="OrthoDB" id="9804792at2"/>
<dbReference type="Proteomes" id="UP000001010">
    <property type="component" value="Chromosome"/>
</dbReference>
<dbReference type="GO" id="GO:0043590">
    <property type="term" value="C:bacterial nucleoid"/>
    <property type="evidence" value="ECO:0000318"/>
    <property type="project" value="GO_Central"/>
</dbReference>
<dbReference type="GO" id="GO:0006310">
    <property type="term" value="P:DNA recombination"/>
    <property type="evidence" value="ECO:0007669"/>
    <property type="project" value="UniProtKB-UniRule"/>
</dbReference>
<dbReference type="GO" id="GO:0006302">
    <property type="term" value="P:double-strand break repair"/>
    <property type="evidence" value="ECO:0000318"/>
    <property type="project" value="GO_Central"/>
</dbReference>
<dbReference type="Gene3D" id="2.40.50.140">
    <property type="entry name" value="Nucleic acid-binding proteins"/>
    <property type="match status" value="1"/>
</dbReference>
<dbReference type="Gene3D" id="1.20.1440.120">
    <property type="entry name" value="Recombination protein O, C-terminal domain"/>
    <property type="match status" value="1"/>
</dbReference>
<dbReference type="HAMAP" id="MF_00201">
    <property type="entry name" value="RecO"/>
    <property type="match status" value="1"/>
</dbReference>
<dbReference type="InterPro" id="IPR037278">
    <property type="entry name" value="ARFGAP/RecO"/>
</dbReference>
<dbReference type="InterPro" id="IPR022572">
    <property type="entry name" value="DNA_rep/recomb_RecO_N"/>
</dbReference>
<dbReference type="InterPro" id="IPR012340">
    <property type="entry name" value="NA-bd_OB-fold"/>
</dbReference>
<dbReference type="InterPro" id="IPR003717">
    <property type="entry name" value="RecO"/>
</dbReference>
<dbReference type="InterPro" id="IPR042242">
    <property type="entry name" value="RecO_C"/>
</dbReference>
<dbReference type="NCBIfam" id="TIGR00613">
    <property type="entry name" value="reco"/>
    <property type="match status" value="1"/>
</dbReference>
<dbReference type="PANTHER" id="PTHR33991">
    <property type="entry name" value="DNA REPAIR PROTEIN RECO"/>
    <property type="match status" value="1"/>
</dbReference>
<dbReference type="PANTHER" id="PTHR33991:SF1">
    <property type="entry name" value="DNA REPAIR PROTEIN RECO"/>
    <property type="match status" value="1"/>
</dbReference>
<dbReference type="Pfam" id="PF02565">
    <property type="entry name" value="RecO_C"/>
    <property type="match status" value="1"/>
</dbReference>
<dbReference type="Pfam" id="PF11967">
    <property type="entry name" value="RecO_N"/>
    <property type="match status" value="1"/>
</dbReference>
<dbReference type="SUPFAM" id="SSF57863">
    <property type="entry name" value="ArfGap/RecO-like zinc finger"/>
    <property type="match status" value="1"/>
</dbReference>
<dbReference type="SUPFAM" id="SSF50249">
    <property type="entry name" value="Nucleic acid-binding proteins"/>
    <property type="match status" value="1"/>
</dbReference>
<reference key="1">
    <citation type="journal article" date="2002" name="Nature">
        <title>Comparison of the genomes of two Xanthomonas pathogens with differing host specificities.</title>
        <authorList>
            <person name="da Silva A.C.R."/>
            <person name="Ferro J.A."/>
            <person name="Reinach F.C."/>
            <person name="Farah C.S."/>
            <person name="Furlan L.R."/>
            <person name="Quaggio R.B."/>
            <person name="Monteiro-Vitorello C.B."/>
            <person name="Van Sluys M.A."/>
            <person name="Almeida N.F. Jr."/>
            <person name="Alves L.M.C."/>
            <person name="do Amaral A.M."/>
            <person name="Bertolini M.C."/>
            <person name="Camargo L.E.A."/>
            <person name="Camarotte G."/>
            <person name="Cannavan F."/>
            <person name="Cardozo J."/>
            <person name="Chambergo F."/>
            <person name="Ciapina L.P."/>
            <person name="Cicarelli R.M.B."/>
            <person name="Coutinho L.L."/>
            <person name="Cursino-Santos J.R."/>
            <person name="El-Dorry H."/>
            <person name="Faria J.B."/>
            <person name="Ferreira A.J.S."/>
            <person name="Ferreira R.C.C."/>
            <person name="Ferro M.I.T."/>
            <person name="Formighieri E.F."/>
            <person name="Franco M.C."/>
            <person name="Greggio C.C."/>
            <person name="Gruber A."/>
            <person name="Katsuyama A.M."/>
            <person name="Kishi L.T."/>
            <person name="Leite R.P."/>
            <person name="Lemos E.G.M."/>
            <person name="Lemos M.V.F."/>
            <person name="Locali E.C."/>
            <person name="Machado M.A."/>
            <person name="Madeira A.M.B.N."/>
            <person name="Martinez-Rossi N.M."/>
            <person name="Martins E.C."/>
            <person name="Meidanis J."/>
            <person name="Menck C.F.M."/>
            <person name="Miyaki C.Y."/>
            <person name="Moon D.H."/>
            <person name="Moreira L.M."/>
            <person name="Novo M.T.M."/>
            <person name="Okura V.K."/>
            <person name="Oliveira M.C."/>
            <person name="Oliveira V.R."/>
            <person name="Pereira H.A."/>
            <person name="Rossi A."/>
            <person name="Sena J.A.D."/>
            <person name="Silva C."/>
            <person name="de Souza R.F."/>
            <person name="Spinola L.A.F."/>
            <person name="Takita M.A."/>
            <person name="Tamura R.E."/>
            <person name="Teixeira E.C."/>
            <person name="Tezza R.I.D."/>
            <person name="Trindade dos Santos M."/>
            <person name="Truffi D."/>
            <person name="Tsai S.M."/>
            <person name="White F.F."/>
            <person name="Setubal J.C."/>
            <person name="Kitajima J.P."/>
        </authorList>
    </citation>
    <scope>NUCLEOTIDE SEQUENCE [LARGE SCALE GENOMIC DNA]</scope>
    <source>
        <strain>ATCC 33913 / DSM 3586 / NCPPB 528 / LMG 568 / P 25</strain>
    </source>
</reference>
<feature type="chain" id="PRO_0000205027" description="DNA repair protein RecO">
    <location>
        <begin position="1"/>
        <end position="241"/>
    </location>
</feature>
<accession>Q8PB50</accession>
<comment type="function">
    <text evidence="1">Involved in DNA repair and RecF pathway recombination.</text>
</comment>
<comment type="similarity">
    <text evidence="1">Belongs to the RecO family.</text>
</comment>
<organism>
    <name type="scientific">Xanthomonas campestris pv. campestris (strain ATCC 33913 / DSM 3586 / NCPPB 528 / LMG 568 / P 25)</name>
    <dbReference type="NCBI Taxonomy" id="190485"/>
    <lineage>
        <taxon>Bacteria</taxon>
        <taxon>Pseudomonadati</taxon>
        <taxon>Pseudomonadota</taxon>
        <taxon>Gammaproteobacteria</taxon>
        <taxon>Lysobacterales</taxon>
        <taxon>Lysobacteraceae</taxon>
        <taxon>Xanthomonas</taxon>
    </lineage>
</organism>
<protein>
    <recommendedName>
        <fullName evidence="1">DNA repair protein RecO</fullName>
    </recommendedName>
    <alternativeName>
        <fullName evidence="1">Recombination protein O</fullName>
    </alternativeName>
</protein>
<keyword id="KW-0227">DNA damage</keyword>
<keyword id="KW-0233">DNA recombination</keyword>
<keyword id="KW-0234">DNA repair</keyword>
<keyword id="KW-1185">Reference proteome</keyword>
<evidence type="ECO:0000255" key="1">
    <source>
        <dbReference type="HAMAP-Rule" id="MF_00201"/>
    </source>
</evidence>